<protein>
    <recommendedName>
        <fullName evidence="1">Small ribosomal subunit protein uS10</fullName>
    </recommendedName>
    <alternativeName>
        <fullName evidence="2">30S ribosomal protein S10</fullName>
    </alternativeName>
</protein>
<gene>
    <name evidence="1" type="primary">rpsJ</name>
    <name type="ordered locus">BQ08240</name>
</gene>
<accession>Q6FZC1</accession>
<feature type="chain" id="PRO_0000146498" description="Small ribosomal subunit protein uS10">
    <location>
        <begin position="1"/>
        <end position="102"/>
    </location>
</feature>
<sequence>MNSQNIRIRLKAFDHRILDASTREIVSTAKRTGANVRGPIPLPTRIEKFTVNRGPHIDKKSREQFEMRTHKRLLDIVDPTPQTVDALMKLDLSAGVDVEIKL</sequence>
<organism>
    <name type="scientific">Bartonella quintana (strain Toulouse)</name>
    <name type="common">Rochalimaea quintana</name>
    <dbReference type="NCBI Taxonomy" id="283165"/>
    <lineage>
        <taxon>Bacteria</taxon>
        <taxon>Pseudomonadati</taxon>
        <taxon>Pseudomonadota</taxon>
        <taxon>Alphaproteobacteria</taxon>
        <taxon>Hyphomicrobiales</taxon>
        <taxon>Bartonellaceae</taxon>
        <taxon>Bartonella</taxon>
    </lineage>
</organism>
<evidence type="ECO:0000255" key="1">
    <source>
        <dbReference type="HAMAP-Rule" id="MF_00508"/>
    </source>
</evidence>
<evidence type="ECO:0000305" key="2"/>
<keyword id="KW-0687">Ribonucleoprotein</keyword>
<keyword id="KW-0689">Ribosomal protein</keyword>
<proteinExistence type="inferred from homology"/>
<dbReference type="EMBL" id="BX897700">
    <property type="protein sequence ID" value="CAF26307.1"/>
    <property type="molecule type" value="Genomic_DNA"/>
</dbReference>
<dbReference type="RefSeq" id="WP_004855744.1">
    <property type="nucleotide sequence ID" value="NC_005955.1"/>
</dbReference>
<dbReference type="SMR" id="Q6FZC1"/>
<dbReference type="GeneID" id="92985262"/>
<dbReference type="KEGG" id="bqu:BQ08240"/>
<dbReference type="eggNOG" id="COG0051">
    <property type="taxonomic scope" value="Bacteria"/>
</dbReference>
<dbReference type="HOGENOM" id="CLU_122625_1_3_5"/>
<dbReference type="OrthoDB" id="9804464at2"/>
<dbReference type="Proteomes" id="UP000000597">
    <property type="component" value="Chromosome"/>
</dbReference>
<dbReference type="GO" id="GO:1990904">
    <property type="term" value="C:ribonucleoprotein complex"/>
    <property type="evidence" value="ECO:0007669"/>
    <property type="project" value="UniProtKB-KW"/>
</dbReference>
<dbReference type="GO" id="GO:0005840">
    <property type="term" value="C:ribosome"/>
    <property type="evidence" value="ECO:0007669"/>
    <property type="project" value="UniProtKB-KW"/>
</dbReference>
<dbReference type="GO" id="GO:0003735">
    <property type="term" value="F:structural constituent of ribosome"/>
    <property type="evidence" value="ECO:0007669"/>
    <property type="project" value="InterPro"/>
</dbReference>
<dbReference type="GO" id="GO:0000049">
    <property type="term" value="F:tRNA binding"/>
    <property type="evidence" value="ECO:0007669"/>
    <property type="project" value="UniProtKB-UniRule"/>
</dbReference>
<dbReference type="GO" id="GO:0006412">
    <property type="term" value="P:translation"/>
    <property type="evidence" value="ECO:0007669"/>
    <property type="project" value="UniProtKB-UniRule"/>
</dbReference>
<dbReference type="FunFam" id="3.30.70.600:FF:000001">
    <property type="entry name" value="30S ribosomal protein S10"/>
    <property type="match status" value="1"/>
</dbReference>
<dbReference type="Gene3D" id="3.30.70.600">
    <property type="entry name" value="Ribosomal protein S10 domain"/>
    <property type="match status" value="1"/>
</dbReference>
<dbReference type="HAMAP" id="MF_00508">
    <property type="entry name" value="Ribosomal_uS10"/>
    <property type="match status" value="1"/>
</dbReference>
<dbReference type="InterPro" id="IPR001848">
    <property type="entry name" value="Ribosomal_uS10"/>
</dbReference>
<dbReference type="InterPro" id="IPR018268">
    <property type="entry name" value="Ribosomal_uS10_CS"/>
</dbReference>
<dbReference type="InterPro" id="IPR027486">
    <property type="entry name" value="Ribosomal_uS10_dom"/>
</dbReference>
<dbReference type="InterPro" id="IPR036838">
    <property type="entry name" value="Ribosomal_uS10_dom_sf"/>
</dbReference>
<dbReference type="NCBIfam" id="NF001861">
    <property type="entry name" value="PRK00596.1"/>
    <property type="match status" value="1"/>
</dbReference>
<dbReference type="NCBIfam" id="TIGR01049">
    <property type="entry name" value="rpsJ_bact"/>
    <property type="match status" value="1"/>
</dbReference>
<dbReference type="PANTHER" id="PTHR11700">
    <property type="entry name" value="30S RIBOSOMAL PROTEIN S10 FAMILY MEMBER"/>
    <property type="match status" value="1"/>
</dbReference>
<dbReference type="Pfam" id="PF00338">
    <property type="entry name" value="Ribosomal_S10"/>
    <property type="match status" value="1"/>
</dbReference>
<dbReference type="PRINTS" id="PR00971">
    <property type="entry name" value="RIBOSOMALS10"/>
</dbReference>
<dbReference type="SMART" id="SM01403">
    <property type="entry name" value="Ribosomal_S10"/>
    <property type="match status" value="1"/>
</dbReference>
<dbReference type="SUPFAM" id="SSF54999">
    <property type="entry name" value="Ribosomal protein S10"/>
    <property type="match status" value="1"/>
</dbReference>
<dbReference type="PROSITE" id="PS00361">
    <property type="entry name" value="RIBOSOMAL_S10"/>
    <property type="match status" value="1"/>
</dbReference>
<comment type="function">
    <text evidence="1">Involved in the binding of tRNA to the ribosomes.</text>
</comment>
<comment type="subunit">
    <text evidence="1">Part of the 30S ribosomal subunit.</text>
</comment>
<comment type="similarity">
    <text evidence="1">Belongs to the universal ribosomal protein uS10 family.</text>
</comment>
<name>RS10_BARQU</name>
<reference key="1">
    <citation type="journal article" date="2004" name="Proc. Natl. Acad. Sci. U.S.A.">
        <title>The louse-borne human pathogen Bartonella quintana is a genomic derivative of the zoonotic agent Bartonella henselae.</title>
        <authorList>
            <person name="Alsmark U.C.M."/>
            <person name="Frank A.C."/>
            <person name="Karlberg E.O."/>
            <person name="Legault B.-A."/>
            <person name="Ardell D.H."/>
            <person name="Canbaeck B."/>
            <person name="Eriksson A.-S."/>
            <person name="Naeslund A.K."/>
            <person name="Handley S.A."/>
            <person name="Huvet M."/>
            <person name="La Scola B."/>
            <person name="Holmberg M."/>
            <person name="Andersson S.G.E."/>
        </authorList>
    </citation>
    <scope>NUCLEOTIDE SEQUENCE [LARGE SCALE GENOMIC DNA]</scope>
    <source>
        <strain>Toulouse</strain>
    </source>
</reference>